<name>RNZ_STRPB</name>
<dbReference type="EC" id="3.1.26.11" evidence="1"/>
<dbReference type="EMBL" id="CP000261">
    <property type="protein sequence ID" value="ABF35849.1"/>
    <property type="molecule type" value="Genomic_DNA"/>
</dbReference>
<dbReference type="SMR" id="Q1JC59"/>
<dbReference type="KEGG" id="spj:MGAS2096_Spy0797"/>
<dbReference type="HOGENOM" id="CLU_031317_2_0_9"/>
<dbReference type="GO" id="GO:0042781">
    <property type="term" value="F:3'-tRNA processing endoribonuclease activity"/>
    <property type="evidence" value="ECO:0007669"/>
    <property type="project" value="UniProtKB-UniRule"/>
</dbReference>
<dbReference type="GO" id="GO:0008270">
    <property type="term" value="F:zinc ion binding"/>
    <property type="evidence" value="ECO:0007669"/>
    <property type="project" value="UniProtKB-UniRule"/>
</dbReference>
<dbReference type="CDD" id="cd07717">
    <property type="entry name" value="RNaseZ_ZiPD-like_MBL-fold"/>
    <property type="match status" value="1"/>
</dbReference>
<dbReference type="FunFam" id="3.60.15.10:FF:000002">
    <property type="entry name" value="Ribonuclease Z"/>
    <property type="match status" value="1"/>
</dbReference>
<dbReference type="Gene3D" id="3.60.15.10">
    <property type="entry name" value="Ribonuclease Z/Hydroxyacylglutathione hydrolase-like"/>
    <property type="match status" value="1"/>
</dbReference>
<dbReference type="HAMAP" id="MF_01818">
    <property type="entry name" value="RNase_Z_BN"/>
    <property type="match status" value="1"/>
</dbReference>
<dbReference type="InterPro" id="IPR001279">
    <property type="entry name" value="Metallo-B-lactamas"/>
</dbReference>
<dbReference type="InterPro" id="IPR036866">
    <property type="entry name" value="RibonucZ/Hydroxyglut_hydro"/>
</dbReference>
<dbReference type="InterPro" id="IPR013471">
    <property type="entry name" value="RNase_Z/BN"/>
</dbReference>
<dbReference type="NCBIfam" id="NF000801">
    <property type="entry name" value="PRK00055.1-3"/>
    <property type="match status" value="1"/>
</dbReference>
<dbReference type="NCBIfam" id="TIGR02651">
    <property type="entry name" value="RNase_Z"/>
    <property type="match status" value="1"/>
</dbReference>
<dbReference type="PANTHER" id="PTHR46018">
    <property type="entry name" value="ZINC PHOSPHODIESTERASE ELAC PROTEIN 1"/>
    <property type="match status" value="1"/>
</dbReference>
<dbReference type="PANTHER" id="PTHR46018:SF2">
    <property type="entry name" value="ZINC PHOSPHODIESTERASE ELAC PROTEIN 1"/>
    <property type="match status" value="1"/>
</dbReference>
<dbReference type="Pfam" id="PF00753">
    <property type="entry name" value="Lactamase_B"/>
    <property type="match status" value="1"/>
</dbReference>
<dbReference type="SUPFAM" id="SSF56281">
    <property type="entry name" value="Metallo-hydrolase/oxidoreductase"/>
    <property type="match status" value="1"/>
</dbReference>
<feature type="chain" id="PRO_1000070335" description="Ribonuclease Z">
    <location>
        <begin position="1"/>
        <end position="309"/>
    </location>
</feature>
<feature type="active site" description="Proton acceptor" evidence="1">
    <location>
        <position position="67"/>
    </location>
</feature>
<feature type="binding site" evidence="1">
    <location>
        <position position="63"/>
    </location>
    <ligand>
        <name>Zn(2+)</name>
        <dbReference type="ChEBI" id="CHEBI:29105"/>
        <label>1</label>
        <note>catalytic</note>
    </ligand>
</feature>
<feature type="binding site" evidence="1">
    <location>
        <position position="65"/>
    </location>
    <ligand>
        <name>Zn(2+)</name>
        <dbReference type="ChEBI" id="CHEBI:29105"/>
        <label>1</label>
        <note>catalytic</note>
    </ligand>
</feature>
<feature type="binding site" evidence="1">
    <location>
        <position position="67"/>
    </location>
    <ligand>
        <name>Zn(2+)</name>
        <dbReference type="ChEBI" id="CHEBI:29105"/>
        <label>2</label>
        <note>catalytic</note>
    </ligand>
</feature>
<feature type="binding site" evidence="1">
    <location>
        <position position="68"/>
    </location>
    <ligand>
        <name>Zn(2+)</name>
        <dbReference type="ChEBI" id="CHEBI:29105"/>
        <label>2</label>
        <note>catalytic</note>
    </ligand>
</feature>
<feature type="binding site" evidence="1">
    <location>
        <position position="145"/>
    </location>
    <ligand>
        <name>Zn(2+)</name>
        <dbReference type="ChEBI" id="CHEBI:29105"/>
        <label>1</label>
        <note>catalytic</note>
    </ligand>
</feature>
<feature type="binding site" evidence="1">
    <location>
        <position position="216"/>
    </location>
    <ligand>
        <name>Zn(2+)</name>
        <dbReference type="ChEBI" id="CHEBI:29105"/>
        <label>1</label>
        <note>catalytic</note>
    </ligand>
</feature>
<feature type="binding site" evidence="1">
    <location>
        <position position="216"/>
    </location>
    <ligand>
        <name>Zn(2+)</name>
        <dbReference type="ChEBI" id="CHEBI:29105"/>
        <label>2</label>
        <note>catalytic</note>
    </ligand>
</feature>
<feature type="binding site" evidence="1">
    <location>
        <position position="274"/>
    </location>
    <ligand>
        <name>Zn(2+)</name>
        <dbReference type="ChEBI" id="CHEBI:29105"/>
        <label>2</label>
        <note>catalytic</note>
    </ligand>
</feature>
<keyword id="KW-0255">Endonuclease</keyword>
<keyword id="KW-0378">Hydrolase</keyword>
<keyword id="KW-0479">Metal-binding</keyword>
<keyword id="KW-0540">Nuclease</keyword>
<keyword id="KW-0819">tRNA processing</keyword>
<keyword id="KW-0862">Zinc</keyword>
<evidence type="ECO:0000255" key="1">
    <source>
        <dbReference type="HAMAP-Rule" id="MF_01818"/>
    </source>
</evidence>
<proteinExistence type="inferred from homology"/>
<reference key="1">
    <citation type="journal article" date="2006" name="Proc. Natl. Acad. Sci. U.S.A.">
        <title>Molecular genetic anatomy of inter- and intraserotype variation in the human bacterial pathogen group A Streptococcus.</title>
        <authorList>
            <person name="Beres S.B."/>
            <person name="Richter E.W."/>
            <person name="Nagiec M.J."/>
            <person name="Sumby P."/>
            <person name="Porcella S.F."/>
            <person name="DeLeo F.R."/>
            <person name="Musser J.M."/>
        </authorList>
    </citation>
    <scope>NUCLEOTIDE SEQUENCE [LARGE SCALE GENOMIC DNA]</scope>
    <source>
        <strain>MGAS2096</strain>
    </source>
</reference>
<organism>
    <name type="scientific">Streptococcus pyogenes serotype M12 (strain MGAS2096)</name>
    <dbReference type="NCBI Taxonomy" id="370553"/>
    <lineage>
        <taxon>Bacteria</taxon>
        <taxon>Bacillati</taxon>
        <taxon>Bacillota</taxon>
        <taxon>Bacilli</taxon>
        <taxon>Lactobacillales</taxon>
        <taxon>Streptococcaceae</taxon>
        <taxon>Streptococcus</taxon>
    </lineage>
</organism>
<sequence length="309" mass="34430">MELQFLGTGAGQPAKQRNVSSLALKLLDEINEVWMFDCGEGTQRQILETTIKPRKIRKIFITHLHGDHIFGLPGFLSSRSFQASEEQTDLDIYGPIGIKTYVLTSLKVSGARVPYQIHFHEFDDKSLGKIMETDKFEVYAERLAHTIFCMGYRVVQKDLEGTLDAEALKAAGVPFGPLFGKIKNGQDVELEDGRLICAKDYISAPKKGKIITIIGDTRKTSASVKLAKDADVLVHESTYGKGDERIARNHGHSTNMQAAQIAHEAGAKRLLLNHVSARFLGRDCRQMEKDAATIFENVKMVQDLEEVII</sequence>
<comment type="function">
    <text evidence="1">Zinc phosphodiesterase, which displays some tRNA 3'-processing endonuclease activity. Probably involved in tRNA maturation, by removing a 3'-trailer from precursor tRNA.</text>
</comment>
<comment type="catalytic activity">
    <reaction evidence="1">
        <text>Endonucleolytic cleavage of RNA, removing extra 3' nucleotides from tRNA precursor, generating 3' termini of tRNAs. A 3'-hydroxy group is left at the tRNA terminus and a 5'-phosphoryl group is left at the trailer molecule.</text>
        <dbReference type="EC" id="3.1.26.11"/>
    </reaction>
</comment>
<comment type="cofactor">
    <cofactor evidence="1">
        <name>Zn(2+)</name>
        <dbReference type="ChEBI" id="CHEBI:29105"/>
    </cofactor>
    <text evidence="1">Binds 2 Zn(2+) ions.</text>
</comment>
<comment type="subunit">
    <text evidence="1">Homodimer.</text>
</comment>
<comment type="similarity">
    <text evidence="1">Belongs to the RNase Z family.</text>
</comment>
<gene>
    <name evidence="1" type="primary">rnz</name>
    <name type="ordered locus">MGAS2096_Spy0797</name>
</gene>
<accession>Q1JC59</accession>
<protein>
    <recommendedName>
        <fullName evidence="1">Ribonuclease Z</fullName>
        <shortName evidence="1">RNase Z</shortName>
        <ecNumber evidence="1">3.1.26.11</ecNumber>
    </recommendedName>
    <alternativeName>
        <fullName evidence="1">tRNA 3 endonuclease</fullName>
    </alternativeName>
    <alternativeName>
        <fullName evidence="1">tRNase Z</fullName>
    </alternativeName>
</protein>